<accession>Q63089</accession>
<accession>O35882</accession>
<accession>Q6AYW1</accession>
<feature type="chain" id="PRO_0000333879" description="Solute carrier family 22 member 1">
    <location>
        <begin position="1"/>
        <end position="556"/>
    </location>
</feature>
<feature type="topological domain" description="Cytoplasmic" evidence="3">
    <location>
        <begin position="1"/>
        <end position="21"/>
    </location>
</feature>
<feature type="transmembrane region" description="Helical" evidence="3">
    <location>
        <begin position="22"/>
        <end position="42"/>
    </location>
</feature>
<feature type="topological domain" description="Extracellular" evidence="3">
    <location>
        <begin position="43"/>
        <end position="150"/>
    </location>
</feature>
<feature type="transmembrane region" description="Helical" evidence="3">
    <location>
        <begin position="151"/>
        <end position="171"/>
    </location>
</feature>
<feature type="topological domain" description="Cytoplasmic" evidence="3">
    <location>
        <begin position="172"/>
        <end position="177"/>
    </location>
</feature>
<feature type="transmembrane region" description="Helical" evidence="3">
    <location>
        <begin position="178"/>
        <end position="198"/>
    </location>
</feature>
<feature type="topological domain" description="Extracellular" evidence="3">
    <location>
        <begin position="199"/>
        <end position="211"/>
    </location>
</feature>
<feature type="transmembrane region" description="Helical" evidence="3">
    <location>
        <begin position="212"/>
        <end position="231"/>
    </location>
</feature>
<feature type="topological domain" description="Cytoplasmic" evidence="3">
    <location>
        <begin position="232"/>
        <end position="238"/>
    </location>
</feature>
<feature type="transmembrane region" description="Helical" evidence="3">
    <location>
        <begin position="239"/>
        <end position="259"/>
    </location>
</feature>
<feature type="topological domain" description="Extracellular" evidence="3">
    <location>
        <begin position="260"/>
        <end position="263"/>
    </location>
</feature>
<feature type="transmembrane region" description="Helical" evidence="3">
    <location>
        <begin position="264"/>
        <end position="284"/>
    </location>
</feature>
<feature type="topological domain" description="Cytoplasmic" evidence="3">
    <location>
        <begin position="285"/>
        <end position="348"/>
    </location>
</feature>
<feature type="transmembrane region" description="Helical" evidence="3">
    <location>
        <begin position="349"/>
        <end position="369"/>
    </location>
</feature>
<feature type="topological domain" description="Extracellular" evidence="3">
    <location>
        <begin position="370"/>
        <end position="377"/>
    </location>
</feature>
<feature type="transmembrane region" description="Helical" evidence="3">
    <location>
        <begin position="378"/>
        <end position="398"/>
    </location>
</feature>
<feature type="topological domain" description="Cytoplasmic" evidence="3">
    <location>
        <begin position="399"/>
        <end position="403"/>
    </location>
</feature>
<feature type="transmembrane region" description="Helical" evidence="3">
    <location>
        <begin position="404"/>
        <end position="424"/>
    </location>
</feature>
<feature type="topological domain" description="Extracellular" evidence="3">
    <location>
        <begin position="425"/>
        <end position="429"/>
    </location>
</feature>
<feature type="transmembrane region" description="Helical" evidence="3">
    <location>
        <begin position="430"/>
        <end position="452"/>
    </location>
</feature>
<feature type="topological domain" description="Cytoplasmic" evidence="3">
    <location>
        <begin position="453"/>
        <end position="465"/>
    </location>
</feature>
<feature type="transmembrane region" description="Helical" evidence="3">
    <location>
        <begin position="466"/>
        <end position="486"/>
    </location>
</feature>
<feature type="topological domain" description="Extracellular" evidence="3">
    <location>
        <begin position="487"/>
        <end position="493"/>
    </location>
</feature>
<feature type="transmembrane region" description="Helical" evidence="3">
    <location>
        <begin position="494"/>
        <end position="514"/>
    </location>
</feature>
<feature type="topological domain" description="Cytoplasmic" evidence="3">
    <location>
        <begin position="515"/>
        <end position="556"/>
    </location>
</feature>
<feature type="short sequence motif" description="Proline-rich sequence" evidence="2">
    <location>
        <begin position="284"/>
        <end position="288"/>
    </location>
</feature>
<feature type="modified residue" description="Phosphoserine" evidence="42">
    <location>
        <position position="334"/>
    </location>
</feature>
<feature type="modified residue" description="Phosphothreonine" evidence="2">
    <location>
        <position position="543"/>
    </location>
</feature>
<feature type="glycosylation site" description="N-linked (GlcNAc...) asparagine" evidence="3">
    <location>
        <position position="71"/>
    </location>
</feature>
<feature type="splice variant" id="VSP_033591" description="In isoform 2." evidence="32 34">
    <location>
        <begin position="1"/>
        <end position="126"/>
    </location>
</feature>
<feature type="splice variant" id="VSP_033592" description="In isoform 2." evidence="32 34">
    <original>VYDTPGSSIVTEFNLVCGDAWKVDLFQSCVNLGFFLGSLVVGYIAD</original>
    <variation>MRWTGTRAPLTVWTHCPAWLPTGVSCHWAPASMAGYTTLPAPPSSL</variation>
    <location>
        <begin position="127"/>
        <end position="172"/>
    </location>
</feature>
<feature type="mutagenesis site" description="Choline affinity is increased fourfold by MMTS; when associated with A-155; A-179; S-322; A-358; A-418; S-437; A-470 and A-474." evidence="22">
    <original>C</original>
    <variation>A</variation>
    <location>
        <position position="26"/>
    </location>
</feature>
<feature type="mutagenesis site" description="Choline affinity is increased fourfold by MMTS; when associated with A-26; A-179; S-322; A-358; A-418; S-437; A-470 and A-474." evidence="22">
    <original>C</original>
    <variation>A</variation>
    <location>
        <position position="155"/>
    </location>
</feature>
<feature type="mutagenesis site" description="Choline affinity is increased fourfold by MMTS; when associated with A-26; A-155; S-322; A-358; A-418; S-437; A-470 and A-474." evidence="22">
    <original>C</original>
    <variation>A</variation>
    <location>
        <position position="179"/>
    </location>
</feature>
<feature type="mutagenesis site" description="No change in TEA and MPP(+) uptake." evidence="15">
    <original>M</original>
    <variation>L</variation>
    <location>
        <position position="212"/>
    </location>
</feature>
<feature type="mutagenesis site" description="Decreased TEA uptake. No change in MPP(+) uptake." evidence="15">
    <original>V</original>
    <variation>G</variation>
    <location>
        <position position="213"/>
    </location>
</feature>
<feature type="mutagenesis site" description="Decreased TEA and MPP(+) uptake." evidence="15">
    <original>S</original>
    <variation>G</variation>
    <location>
        <position position="214"/>
    </location>
</feature>
<feature type="mutagenesis site" description="Loss of TEA and MPP(+) uptake activity." evidence="15">
    <original>K</original>
    <variation>Q</variation>
    <location>
        <position position="215"/>
    </location>
</feature>
<feature type="mutagenesis site" description="Loss of TEA and MPP(+) uptake activity." evidence="15">
    <original>K</original>
    <variation>R</variation>
    <location>
        <position position="215"/>
    </location>
</feature>
<feature type="mutagenesis site" description="Decreased TEA and MPP(+) uptake." evidence="15">
    <original>G</original>
    <variation>A</variation>
    <location>
        <position position="216"/>
    </location>
</feature>
<feature type="mutagenesis site" description="No change in TEA and MPP(+) uptake." evidence="15">
    <original>S</original>
    <variation>G</variation>
    <location>
        <position position="217"/>
    </location>
</feature>
<feature type="mutagenesis site" description="Decreased guanidine, histamine, serotonin and TEA uptake. No change in MPP(+) uptake. No change in TEA and MPP(+) affinity. Decreased TEA Vmax. No change in MPP(+) Vmax." evidence="15">
    <original>W</original>
    <variation>F</variation>
    <location>
        <position position="218"/>
    </location>
</feature>
<feature type="mutagenesis site" description="Decreased guanidine, histamine, serotonin, TEA and MPP(+) uptake. Decreased TEA affinity. No change in MPP(+) affinity. Decreased TEA and MPP(+) Vmax." evidence="15">
    <original>W</original>
    <variation>L</variation>
    <location>
        <position position="218"/>
    </location>
</feature>
<feature type="mutagenesis site" description="Decreased guanidine, histamine, serotonin and TEA uptake. No change in MPP(+) uptake. Increased TEA and MPP(+) affinity. Decreased TEA and MPP(+) Vmax." evidence="15">
    <original>W</original>
    <variation>Y</variation>
    <location>
        <position position="218"/>
    </location>
</feature>
<feature type="mutagenesis site" description="No change in TEA and MPP(+) uptake." evidence="15">
    <original>V</original>
    <variation>L</variation>
    <location>
        <position position="219"/>
    </location>
</feature>
<feature type="mutagenesis site" description="Decreased TEA and MPP(+) uptake." evidence="15">
    <original>S</original>
    <variation>I</variation>
    <location>
        <position position="220"/>
    </location>
</feature>
<feature type="mutagenesis site" description="Decreased TEA and MPP(+) uptake." evidence="15">
    <original>G</original>
    <variation>A</variation>
    <location>
        <position position="221"/>
    </location>
</feature>
<feature type="mutagenesis site" description="No change in guanidine, histamine, serotonin, TEA and MPP(+) uptake. Increased TEA affinity. No change in MPP(+) affinity. Decreased TEA Vmax. No change in MPP(+) Vmax." evidence="15">
    <original>Y</original>
    <variation>F</variation>
    <location>
        <position position="222"/>
    </location>
</feature>
<feature type="mutagenesis site" description="Decreased guanidine, serotonin, TEA and MPP(+) uptake. No change in histamine uptake. Increased TEA and MPP(+) affinity. Decreased TEA and MPP(+) Vmax." evidence="15">
    <original>Y</original>
    <variation>L</variation>
    <location>
        <position position="222"/>
    </location>
</feature>
<feature type="mutagenesis site" description="Decreased TEA uptake. No change in MPP(+) uptake." evidence="15">
    <original>T</original>
    <variation>I</variation>
    <location>
        <position position="223"/>
    </location>
</feature>
<feature type="mutagenesis site" description="Decreased TEA and MPP(+) uptake." evidence="15">
    <original>L</original>
    <variation>V</variation>
    <location>
        <position position="224"/>
    </location>
</feature>
<feature type="mutagenesis site" description="No change in TEA and MPP(+) uptake." evidence="15">
    <original>I</original>
    <variation>G</variation>
    <location>
        <position position="225"/>
    </location>
</feature>
<feature type="mutagenesis site" description="Decreased TEA uptake. No change in MPP(+) uptake." evidence="15">
    <original>T</original>
    <variation>A</variation>
    <location>
        <position position="226"/>
    </location>
</feature>
<feature type="mutagenesis site" description="Loss of TEA and MPP(+) uptake activity." evidence="15">
    <original>E</original>
    <variation>D</variation>
    <location>
        <position position="227"/>
    </location>
</feature>
<feature type="mutagenesis site" description="Loss of TEA and MPP(+) uptake activity." evidence="15">
    <original>E</original>
    <variation>Q</variation>
    <location>
        <position position="227"/>
    </location>
</feature>
<feature type="mutagenesis site" description="No change in TEA and MPP(+) uptake." evidence="15">
    <original>F</original>
    <variation>I</variation>
    <location>
        <position position="228"/>
    </location>
</feature>
<feature type="mutagenesis site" description="Decreased TEA and MPP(+) uptake." evidence="15">
    <original>V</original>
    <variation>A</variation>
    <location>
        <position position="229"/>
    </location>
</feature>
<feature type="mutagenesis site" description="Loss of TEA and MPP(+) uptake activity." evidence="15">
    <original>V</original>
    <variation>L</variation>
    <location>
        <position position="229"/>
    </location>
</feature>
<feature type="mutagenesis site" description="No effect of PKC-induced stimulation on ASP uptake. No effect of PKC-induced stimulation on ASP uptake; when associated with A-292; A-296; A-328 and A-550. No effect of PKA activation on ASP uptake. No effect of PKA activation on ASP uptake; when associated with A-292; A-296; A-328 and A-550. Significant reduction of ASP uptake by p56(lck) tyrosine kinase-induced inhibition. Significant reduction of ASP uptake by p56(lck) tyrosine kinase-induced inhibition; when associated with A-292; A-296; A-328 and A-550. No significant effect on trafficking from intracellular pools to the cell membrane; when associated with A-292; A-296; A-328 and A-550. suppresses phosphorylation by PKC; when associated with A-292; A-296; A-328 and A-550." evidence="17">
    <original>S</original>
    <variation>A</variation>
    <location>
        <position position="286"/>
    </location>
</feature>
<feature type="mutagenesis site" description="No effect of PKC-induced stimulation on ASP uptake. No effect of PKC-induced stimulation on ASP uptake; when associated with A-286; A-296; A-328 and A-550. No effect of PKA activation on ASP uptake. No effect of PKA activation on ASP uptake; when associated with A-286; A-296; A-328 and A-550. Significant reduction of ASP uptake by p56(lck) tyrosine kinase-induced inhibition. Significant reduction of ASP uptake by p56(lck) tyrosine kinase-induced inhibition; when associated with A-286; A-296; A-328 and A-550. No significant effect on trafficking from intracellular pools to the cell membrane; when associated with A-286; A-296; A-328 and A-550. suppresses phosphorylation by PKC; when associated with A-286; A-296; A-328 and A-550." evidence="17">
    <original>S</original>
    <variation>A</variation>
    <location>
        <position position="292"/>
    </location>
</feature>
<feature type="mutagenesis site" description="No effect of PKC-induced stimulation on ASP uptake. No effect of PKC-induced stimulation on ASP uptake; when associated with A-286; A-292; A-328; A-550. Significant increase of the ASP uptake by PKA activation. No effect of PKA activation on ASP uptake; when associated with A-286; A-292; A-328; A-550. Significant reduction of ASP uptake by p56(lck) tyrosine kinase-induced inhibition. Significant reduction of ASP uptake by p56(lck) tyrosine kinase-induced inhibition; when associated with A-286; A-292; A-328; A-550. No significant effect on trafficking from intracellular pools to the cell membrane; when associated with A-286; A-292; A-328 and A-550. suppresses phosphorylation by PKC; when associated with A-286; A-292; A-328 and A-550." evidence="17">
    <original>T</original>
    <variation>A</variation>
    <location>
        <position position="296"/>
    </location>
</feature>
<feature type="mutagenesis site" description="Reduces the activation by MMTS. Abolishes the activation by MMTs; when associated with M-451. Choline affinity is increased fivefold by MMTS. Choline affinity is increased fourfold by MMTS; when associated with A-26; A-155; A-179; A-358; A-418; S-437; A-470 and A-474. Choline affinity is increased four- to fivefold; when associated with M-451." evidence="22">
    <original>C</original>
    <variation>S</variation>
    <location>
        <position position="322"/>
    </location>
</feature>
<feature type="mutagenesis site" description="No effect of PKC-induced stimulation on ASP uptake. No effect of PKC-induced stimulation on ASP uptake; when associated with A-286; A-292; A-296 and A-550. No effect of PKA activation on ASP uptake. No effect of PKA activation on ASP uptake; when associated with A-286; A-292; A-296 and A-550. Significant reduction of ASP uptake by p56(lck) tyrosine kinase-induced inhibition. Significant reduction of ASP uptake by p56(lck) tyrosine kinase-induced inhibition; when associated with A-286; A-292; A-296; A-550. No significant effect on trafficking from intracellular pools to the cell membrane; when associated with A-286; A-292; A-296 and A-550. suppresses phosphorylation by PKC; when associated with A-286; A-292; A-296 and A-550." evidence="17">
    <original>S</original>
    <variation>A</variation>
    <location>
        <position position="328"/>
    </location>
</feature>
<feature type="mutagenesis site" description="Choline affinity is increased fourfold by MMTS; when associated with A-26; A-155; A-179; S-322; A-418; S-437; A-470 and A-474." evidence="22">
    <original>C</original>
    <variation>A</variation>
    <location>
        <position position="358"/>
    </location>
</feature>
<feature type="mutagenesis site" description="Choline affinity is increased fourfold by MMTS; when associated with A-26; A-155; A-179; S-322; A-358; S-437; A-470 and A-474." evidence="22">
    <original>C</original>
    <variation>A</variation>
    <location>
        <position position="418"/>
    </location>
</feature>
<feature type="mutagenesis site" description="Choline affinity is increased fourfold by MMTS; when associated with A-26; A-155; A-179; S-322; A-358; A-418; A-470 and A-474." evidence="22">
    <original>C</original>
    <variation>S</variation>
    <location>
        <position position="437"/>
    </location>
</feature>
<feature type="mutagenesis site" description="Reduces the activation by MMTS. Abolishes the activation by MMTs; when associated with S-322. Abolishes the effect of MMTs on choline-induced currents. Choline affinity is not influenced by MMTS. Choline affinity is increased four- to fivefold; when associated with S-322." evidence="22">
    <original>C</original>
    <variation>M</variation>
    <location>
        <position position="451"/>
    </location>
</feature>
<feature type="mutagenesis site" description="Choline affinity is increased fourfold by MMTS; when associated with A-26; A-155; A-179; S-322; A-358; A-418; A-437 and A-474." evidence="22">
    <original>C</original>
    <variation>A</variation>
    <location>
        <position position="470"/>
    </location>
</feature>
<feature type="mutagenesis site" description="Choline affinity is increased fourfold by MMTS; when associated with A-26; A-155; A-179; S-322; A-358; A-418; A-437 and A-470." evidence="22">
    <original>C</original>
    <variation>A</variation>
    <location>
        <position position="474"/>
    </location>
</feature>
<feature type="mutagenesis site" description="Decreased MPP(+) uptake, no change in MPP(+) affinity. Decreased NMN uptake, increased NMN affinity. Decreased choline uptake, increased choline affinity." evidence="4">
    <original>D</original>
    <variation>E</variation>
    <location>
        <position position="475"/>
    </location>
</feature>
<feature type="mutagenesis site" description="Decreased MPP(+) uptake." evidence="4">
    <original>D</original>
    <variation>N</variation>
    <location>
        <position position="475"/>
    </location>
</feature>
<feature type="mutagenesis site" description="Decreased MPP(+) uptake." evidence="4">
    <original>D</original>
    <variation>R</variation>
    <location>
        <position position="475"/>
    </location>
</feature>
<feature type="mutagenesis site" description="No effect of PKC-induced stimulation on ASP uptake. No effect of PKC-induced stimulation on ASP uptake; when associated with A-286; A-292; A-296; A-328. Significant increase of the ASP uptake by PKA activation. No effect of PKA activation on ASP uptake; when associated with A-286; A-292; A-296 and A-328. Significant reduction of ASP uptake by p56(lck) tyrosine kinase-induced inhibition. Significant reduction of ASP uptake by p56(lck) tyrosine kinase-induced inhibition; when associated with A-286; A-292; A-296; A-328. No significant effect on trafficking from intracellular pools to the cell membrane; when associated with A-286; A-292; A-296 and A-328. suppresses phosphorylation by PKC; when associated with A-286; A-292; A-296 and A-328." evidence="17">
    <original>T</original>
    <variation>A</variation>
    <location>
        <position position="550"/>
    </location>
</feature>
<sequence>MPTVDDVLEQVGEFGWFQKQAFLLLCLISASLAPIYVGIVFLGFTPGHYCQNPGVAELSQRCGWSQAEELNYTVPGLGPSDEASFLSQCMRYEVDWNQSTLDCVDPLSSLVANRSQLPLGPCEHGWVYDTPGSSIVTEFNLVCGDAWKVDLFQSCVNLGFFLGSLVVGYIADRFGRKLCLLVTTLVTSVSGVLTAVAPDYTSMLLFRLLQGMVSKGSWVSGYTLITEFVGSGYRRTTAILYQMAFTVGLVGLAGVAYAIPDWRWLQLAVSLPTFLFLLYYWFVPESPRWLLSQKRTTRAVRIMEQIAQKNGKVPPADLKMLCLEEDASEKRSPSFADLFRTPNLRKHTVILMYLWFSCAVLYQGLIMHVGATGANLYLDFFYSSLVEFPAAFIILVTIDRIGRIYPIAASNLVTGAACLLMIFIPHELHWLNVTLACLGRMGATIVLQMVCLVNAELYPTFIRNLGMMVCSALCDLGGIFTPFMVFRLMEVWQALPLILFGVLGLTAGAMTLLLPETKGVALPETIEEAENLGRRKSKAKENTIYLQVQTGKSSST</sequence>
<organism>
    <name type="scientific">Rattus norvegicus</name>
    <name type="common">Rat</name>
    <dbReference type="NCBI Taxonomy" id="10116"/>
    <lineage>
        <taxon>Eukaryota</taxon>
        <taxon>Metazoa</taxon>
        <taxon>Chordata</taxon>
        <taxon>Craniata</taxon>
        <taxon>Vertebrata</taxon>
        <taxon>Euteleostomi</taxon>
        <taxon>Mammalia</taxon>
        <taxon>Eutheria</taxon>
        <taxon>Euarchontoglires</taxon>
        <taxon>Glires</taxon>
        <taxon>Rodentia</taxon>
        <taxon>Myomorpha</taxon>
        <taxon>Muroidea</taxon>
        <taxon>Muridae</taxon>
        <taxon>Murinae</taxon>
        <taxon>Rattus</taxon>
    </lineage>
</organism>
<proteinExistence type="evidence at protein level"/>
<protein>
    <recommendedName>
        <fullName evidence="31">Solute carrier family 22 member 1</fullName>
    </recommendedName>
    <alternativeName>
        <fullName evidence="33">Organic cation transporter 1</fullName>
        <shortName evidence="33">rOCT1</shortName>
    </alternativeName>
</protein>
<name>S22A1_RAT</name>
<gene>
    <name evidence="41" type="primary">Slc22a1</name>
    <name type="synonym">Oct1</name>
</gene>
<reference key="1">
    <citation type="journal article" date="1994" name="Nature">
        <title>Drug excretion mediated by a new prototype of polyspecific transporter.</title>
        <authorList>
            <person name="Gruendemann D."/>
            <person name="Gorboulev V."/>
            <person name="Gambaryan S."/>
            <person name="Veyhl M."/>
            <person name="Koepsell H."/>
        </authorList>
    </citation>
    <scope>NUCLEOTIDE SEQUENCE [MRNA] (ISOFORM 1)</scope>
    <scope>FUNCTION</scope>
    <scope>SUBCELLULAR LOCATION</scope>
    <scope>TISSUE SPECIFICITY</scope>
    <source>
        <tissue>Liver</tissue>
    </source>
</reference>
<reference key="2">
    <citation type="journal article" date="1997" name="J. Biol. Chem.">
        <title>Cloning and functional characterization of a rat renal organic cation transporter isoform (rOCT1A).</title>
        <authorList>
            <person name="Zhang L."/>
            <person name="Dresser M.J."/>
            <person name="Chun J.K."/>
            <person name="Babbitt P.C."/>
            <person name="Giacomini K.M."/>
        </authorList>
    </citation>
    <scope>NUCLEOTIDE SEQUENCE [MRNA] (ISOFORM 2)</scope>
    <scope>FUNCTION (ISOFORM 2)</scope>
    <scope>TISSUE SPECIFICITY</scope>
    <scope>TISSUE SPECIFICITY (ISOFORM 2)</scope>
    <source>
        <strain>Sprague-Dawley</strain>
        <tissue>Kidney</tissue>
    </source>
</reference>
<reference key="3">
    <citation type="journal article" date="2004" name="Genome Res.">
        <title>The status, quality, and expansion of the NIH full-length cDNA project: the Mammalian Gene Collection (MGC).</title>
        <authorList>
            <consortium name="The MGC Project Team"/>
        </authorList>
    </citation>
    <scope>NUCLEOTIDE SEQUENCE [LARGE SCALE MRNA] (ISOFORM 2)</scope>
    <source>
        <tissue>Kidney</tissue>
    </source>
</reference>
<reference key="4">
    <citation type="journal article" date="1996" name="J. Biol. Chem.">
        <title>Electrogenic properties and substrate specificity of the polyspecific rat cation transporter rOCT1.</title>
        <authorList>
            <person name="Busch A.E."/>
            <person name="Quester S."/>
            <person name="Ulzheimer J.C."/>
            <person name="Waldegger S."/>
            <person name="Gorboulev V."/>
            <person name="Arndt P."/>
            <person name="Lang F."/>
            <person name="Koepsell H."/>
        </authorList>
    </citation>
    <scope>FUNCTION</scope>
    <scope>TRANSPORTER ACTIVITY</scope>
    <scope>BIOPHYSICOCHEMICAL PROPERTIES</scope>
    <scope>MISCELLANEOUS</scope>
</reference>
<reference key="5">
    <citation type="journal article" date="1997" name="J. Biol. Chem.">
        <title>A reevaluation of substrate specificity of the rat cation transporter rOCT1.</title>
        <authorList>
            <person name="Nagel G."/>
            <person name="Volk C."/>
            <person name="Friedrich T."/>
            <person name="Ulzheimer J.C."/>
            <person name="Bamberg E."/>
            <person name="Koepsell H."/>
        </authorList>
    </citation>
    <scope>FUNCTION</scope>
</reference>
<reference key="6">
    <citation type="journal article" date="1998" name="Biochem. Biophys. Res. Commun.">
        <title>Membrane localization of the electrogenic cation transporter rOCT1 in rat liver.</title>
        <authorList>
            <person name="Meyer-Wentrup F."/>
            <person name="Karbach U."/>
            <person name="Gorboulev V."/>
            <person name="Arndt P."/>
            <person name="Koepsell H."/>
        </authorList>
    </citation>
    <scope>FUNCTION</scope>
    <scope>SUBCELLULAR LOCATION</scope>
    <scope>TISSUE SPECIFICITY</scope>
</reference>
<reference key="7">
    <citation type="journal article" date="1998" name="J. Biol. Chem.">
        <title>Identity of the organic cation transporter OCT3 as the extraneuronal monoamine transporter (uptake2) and evidence for the expression of the transporter in the brain.</title>
        <authorList>
            <person name="Wu X."/>
            <person name="Kekuda R."/>
            <person name="Huang W."/>
            <person name="Fei Y.-J."/>
            <person name="Leibach F.H."/>
            <person name="Chen J."/>
            <person name="Conway S.J."/>
            <person name="Ganapathy V."/>
        </authorList>
    </citation>
    <scope>TISSUE SPECIFICITY</scope>
    <source>
        <tissue>Placenta</tissue>
    </source>
</reference>
<reference key="8">
    <citation type="journal article" date="1998" name="Br. J. Pharmacol.">
        <title>Catecholamine transport by the organic cation transporter type 1 (OCT1).</title>
        <authorList>
            <person name="Breidert T."/>
            <person name="Spitzenberger F."/>
            <person name="Gruendemann D."/>
            <person name="Schoemig E."/>
        </authorList>
    </citation>
    <scope>FUNCTION</scope>
    <scope>TRANSPORTER ACTIVITY</scope>
    <scope>MISCELLANEOUS</scope>
</reference>
<reference key="9">
    <citation type="journal article" date="1998" name="J. Pharmacol. Exp. Ther.">
        <title>Functional characteristics and membrane localization of rat multispecific organic cation transporters, OCT1 and OCT2, mediating tubular secretion of cationic drugs.</title>
        <authorList>
            <person name="Urakami Y."/>
            <person name="Okuda M."/>
            <person name="Masuda S."/>
            <person name="Saito H."/>
            <person name="Inui K."/>
        </authorList>
    </citation>
    <scope>SUBCELLULAR LOCATION</scope>
    <scope>TISSUE SPECIFICITY</scope>
</reference>
<reference key="10">
    <citation type="journal article" date="1999" name="Mol. Pharmacol.">
        <title>Selectivity of the polyspecific cation transporter rOCT1 is changed by mutation of aspartate 475 to glutamate.</title>
        <authorList>
            <person name="Gorboulev V."/>
            <person name="Volk C."/>
            <person name="Arndt P."/>
            <person name="Akhoundova A."/>
            <person name="Koepsell H."/>
        </authorList>
    </citation>
    <scope>FUNCTION</scope>
    <scope>TRANSPORTER ACTIVITY</scope>
    <scope>BIOPHYSICOCHEMICAL PROPERTIES</scope>
    <scope>SUBCELLULAR LOCATION</scope>
    <scope>DOMAIN</scope>
    <scope>MISCELLANEOUS</scope>
    <scope>MUTAGENESIS OF ASP-475</scope>
</reference>
<reference key="11">
    <citation type="journal article" date="2000" name="Am. J. Physiol.">
        <title>Localization of organic cation transporters OCT1 and OCT2 in rat kidney.</title>
        <authorList>
            <person name="Karbach U."/>
            <person name="Kricke J."/>
            <person name="Meyer-Wentrup F."/>
            <person name="Gorboulev V."/>
            <person name="Volk C."/>
            <person name="Loffing-Cueni D."/>
            <person name="Kaissling B."/>
            <person name="Bachmann S."/>
            <person name="Koepsell H."/>
        </authorList>
    </citation>
    <scope>FUNCTION</scope>
    <scope>SUBCELLULAR LOCATION</scope>
    <scope>TISSUE SPECIFICITY</scope>
</reference>
<reference key="12">
    <citation type="journal article" date="2000" name="Histochem. Cell Biol.">
        <title>Differential localization of organic cation transporters rOCT1 and rOCT2 in the basolateral membrane of rat kidney proximal tubules.</title>
        <authorList>
            <person name="Sugawara-Yokoo M."/>
            <person name="Urakami Y."/>
            <person name="Koyama H."/>
            <person name="Fujikura K."/>
            <person name="Masuda S."/>
            <person name="Saito H."/>
            <person name="Naruse T."/>
            <person name="Inui K."/>
            <person name="Takata K."/>
        </authorList>
    </citation>
    <scope>SUBCELLULAR LOCATION</scope>
    <scope>TISSUE SPECIFICITY</scope>
</reference>
<reference key="13">
    <citation type="journal article" date="2000" name="J. Am. Soc. Nephrol.">
        <title>The affinity of the organic cation transporter rOCT1 is increased by protein kinase C-dependent phosphorylation.</title>
        <authorList>
            <person name="Mehrens T."/>
            <person name="Lelleck S."/>
            <person name="Cetinkaya I."/>
            <person name="Knollmann M."/>
            <person name="Hohage H."/>
            <person name="Gorboulev V."/>
            <person name="Boknik P."/>
            <person name="Koepsell H."/>
            <person name="Schlatter E."/>
        </authorList>
    </citation>
    <scope>FUNCTION</scope>
    <scope>ACTIVITY REGULATION</scope>
    <scope>PHOSPHORYLATION</scope>
</reference>
<reference key="14">
    <citation type="journal article" date="2001" name="Am. J. Physiol.">
        <title>Interaction of cations, anions, and weak base quinine with rat renal cation transporter rOCT2 compared with rOCT1.</title>
        <authorList>
            <person name="Arndt P."/>
            <person name="Volk C."/>
            <person name="Gorboulev V."/>
            <person name="Budiman T."/>
            <person name="Popp C."/>
            <person name="Ulzheimer-Teuber I."/>
            <person name="Akhoundova A."/>
            <person name="Koppatz S."/>
            <person name="Bamberg E."/>
            <person name="Nagel G."/>
            <person name="Koepsell H."/>
        </authorList>
    </citation>
    <scope>FUNCTION</scope>
    <scope>TRANSPORTER ACTIVITY</scope>
    <scope>BIOPHYSICOCHEMICAL PROPERTIES</scope>
</reference>
<reference key="15">
    <citation type="journal article" date="2001" name="J. Pharmacol. Exp. Ther.">
        <title>Comparison of 'type I' and 'type II' organic cation transport by organic cation transporters and organic anion-transporting polypeptides.</title>
        <authorList>
            <person name="van Montfoort J.E."/>
            <person name="Mueller M."/>
            <person name="Groothuis G.M.M."/>
            <person name="Meijer D.K.F."/>
            <person name="Koepsell H."/>
            <person name="Meier P.J."/>
        </authorList>
    </citation>
    <scope>FUNCTION</scope>
    <scope>BIOPHYSICOCHEMICAL PROPERTIES</scope>
</reference>
<reference key="16">
    <citation type="journal article" date="2001" name="Pharm. Res.">
        <title>Distinct characteristics of organic cation transporters, OCT1 and OCT2, in the basolateral membrane of renal tubules.</title>
        <authorList>
            <person name="Urakami Y."/>
            <person name="Okuda M."/>
            <person name="Masuda S."/>
            <person name="Akazawa M."/>
            <person name="Saito H."/>
            <person name="Inui K."/>
        </authorList>
    </citation>
    <scope>FUNCTION</scope>
    <scope>TISSUE SPECIFICITY</scope>
</reference>
<reference key="17">
    <citation type="journal article" date="2002" name="Drug Metab. Dispos.">
        <title>Tissue distribution and renal developmental changes in rat organic cation transporter mRNA levels.</title>
        <authorList>
            <person name="Slitt A.L."/>
            <person name="Cherrington N.J."/>
            <person name="Hartley D.P."/>
            <person name="Leazer T.M."/>
            <person name="Klaassen C.D."/>
        </authorList>
    </citation>
    <scope>TISSUE SPECIFICITY</scope>
    <scope>DEVELOPMENTAL STAGE</scope>
</reference>
<reference key="18">
    <citation type="journal article" date="2002" name="J. Membr. Biol.">
        <title>The organic cation transporters rOCT1 and hOCT2 are inhibited by cGMP.</title>
        <authorList>
            <person name="Schlatter E."/>
            <person name="Moennich V."/>
            <person name="Cetinkaya I."/>
            <person name="Mehrens T."/>
            <person name="Ciarimboli G."/>
            <person name="Hirsch J.R."/>
            <person name="Popp C."/>
            <person name="Koepsell H."/>
        </authorList>
    </citation>
    <scope>FUNCTION</scope>
    <scope>ACTIVITY REGULATION</scope>
    <scope>MISCELLANEOUS</scope>
</reference>
<reference key="19">
    <citation type="journal article" date="2004" name="Hepatology">
        <title>Down-regulation of the organic cation transporter 1 of rat liver in obstructive cholestasis.</title>
        <authorList>
            <person name="Denk G.U."/>
            <person name="Soroka C.J."/>
            <person name="Mennone A."/>
            <person name="Koepsell H."/>
            <person name="Beuers U."/>
            <person name="Boyer J.L."/>
        </authorList>
    </citation>
    <scope>INDUCTION</scope>
</reference>
<reference key="20">
    <citation type="journal article" date="2005" name="Am. J. Respir. Cell Mol. Biol.">
        <title>Polyspecific cation transporters mediate luminal release of acetylcholine from bronchial epithelium.</title>
        <authorList>
            <person name="Lips K.S."/>
            <person name="Volk C."/>
            <person name="Schmitt B.M."/>
            <person name="Pfeil U."/>
            <person name="Arndt P."/>
            <person name="Miska D."/>
            <person name="Ermert L."/>
            <person name="Kummer W."/>
            <person name="Koepsell H."/>
        </authorList>
    </citation>
    <scope>FUNCTION</scope>
    <scope>TRANSPORTER ACTIVITY</scope>
    <scope>SUBCELLULAR LOCATION</scope>
    <scope>TISSUE SPECIFICITY</scope>
</reference>
<reference key="21">
    <citation type="journal article" date="2005" name="Biochemistry">
        <title>Purification and functional reconstitution of the rat organic cation transporter OCT1.</title>
        <authorList>
            <person name="Keller T."/>
            <person name="Elfeber M."/>
            <person name="Gorboulev V."/>
            <person name="Reilaender H."/>
            <person name="Koepsell H."/>
        </authorList>
    </citation>
    <scope>FUNCTION</scope>
    <scope>MISCELLANEOUS</scope>
</reference>
<reference key="22">
    <citation type="journal article" date="2005" name="Drug Metab. Dispos.">
        <title>Transport of the dopamine D2 agonist pramipexole by rat organic cation transporters OCT1 and OCT2 in kidney.</title>
        <authorList>
            <person name="Ishiguro N."/>
            <person name="Saito A."/>
            <person name="Yokoyama K."/>
            <person name="Morikawa M."/>
            <person name="Igarashi T."/>
            <person name="Tamai I."/>
        </authorList>
    </citation>
    <scope>FUNCTION</scope>
    <scope>MISCELLANEOUS</scope>
</reference>
<reference key="23">
    <citation type="journal article" date="2005" name="Drug Metab. Pharmacokinet.">
        <title>Metformin is a superior substrate for renal organic cation transporter OCT2 rather than hepatic OCT1.</title>
        <authorList>
            <person name="Kimura N."/>
            <person name="Masuda S."/>
            <person name="Tanihara Y."/>
            <person name="Ueo H."/>
            <person name="Okuda M."/>
            <person name="Katsura T."/>
            <person name="Inui K."/>
        </authorList>
    </citation>
    <scope>FUNCTION</scope>
    <scope>TISSUE SPECIFICITY</scope>
    <scope>MISCELLANEOUS</scope>
</reference>
<reference key="24">
    <citation type="journal article" date="2005" name="J. Am. Soc. Nephrol.">
        <title>Individual PKC-phosphorylation sites in organic cation transporter 1 determine substrate selectivity and transport regulation.</title>
        <authorList>
            <person name="Ciarimboli G."/>
            <person name="Koepsell H."/>
            <person name="Iordanova M."/>
            <person name="Gorboulev V."/>
            <person name="Durner B."/>
            <person name="Lang D."/>
            <person name="Edemir B."/>
            <person name="Schroter R."/>
            <person name="Van Le T."/>
            <person name="Schlatter E."/>
        </authorList>
    </citation>
    <scope>MUTAGENESIS OF SER-286; SER-292; THR-296; SER-328 AND THR-550</scope>
    <scope>PHOSPHORYLATION</scope>
</reference>
<reference key="25">
    <citation type="journal article" date="2005" name="Mol. Pharmacol.">
        <title>Amino acids critical for substrate affinity of rat organic cation transporter 1 line the substrate binding region in a model derived from the tertiary structure of lactose permease.</title>
        <authorList>
            <person name="Popp C."/>
            <person name="Gorboulev V."/>
            <person name="Mueller T.D."/>
            <person name="Gorbunov D."/>
            <person name="Shatskaya N."/>
            <person name="Koepsell H."/>
        </authorList>
    </citation>
    <scope>FUNCTION</scope>
    <scope>TRANSPORTER ACTIVITY</scope>
    <scope>DOMAIN</scope>
    <scope>MISCELLANEOUS</scope>
    <scope>MUTAGENESIS OF MET-212; VAL-213; SER-214; LYS-215; GLY-216; SER-217; TRP-218; VAL-219; SER-220; GLY-221; TYR-222; THR-223; LEU-224; ILE-225; THR-226; GLU-227; PHE-228 AND VAL-229</scope>
</reference>
<reference key="26">
    <citation type="journal article" date="2006" name="Neuropharmacology">
        <title>Differential pharmacological in vitro properties of organic cation transporters and regional distribution in rat brain.</title>
        <authorList>
            <person name="Amphoux A."/>
            <person name="Vialou V."/>
            <person name="Drescher E."/>
            <person name="Bruess M."/>
            <person name="Mannoury La Cour C."/>
            <person name="Rochat C."/>
            <person name="Millan M.J."/>
            <person name="Giros B."/>
            <person name="Boenisch H."/>
            <person name="Gautron S."/>
        </authorList>
    </citation>
    <scope>FUNCTION</scope>
    <scope>TRANSPORTER ACTIVITY</scope>
    <scope>BIOPHYSICOCHEMICAL PROPERTIES</scope>
    <scope>TISSUE SPECIFICITY</scope>
    <scope>MISCELLANEOUS</scope>
</reference>
<reference key="27">
    <citation type="journal article" date="2007" name="Am. J. Physiol.">
        <title>Identification of cysteines in rat organic cation transporters rOCT1 (C322, C451) and rOCT2 (C451) critical for transport activity and substrate affinity.</title>
        <authorList>
            <person name="Sturm A."/>
            <person name="Gorboulev V."/>
            <person name="Gorbunov D."/>
            <person name="Keller T."/>
            <person name="Volk C."/>
            <person name="Schmitt B.M."/>
            <person name="Schlachtbauer P."/>
            <person name="Ciarimboli G."/>
            <person name="Koepsell H."/>
        </authorList>
    </citation>
    <scope>FUNCTION</scope>
    <scope>TRANSPORTER ACTIVITY</scope>
    <scope>DOMAIN</scope>
    <scope>MISCELLANEOUS</scope>
    <scope>MUTAGENESIS OF CYS-26; CYS-155; CYS-179; CYS-322; CYS-358; CYS-418; CYS-437; CYS-451; CYS-470 AND CYS-474</scope>
</reference>
<reference key="28">
    <citation type="journal article" date="2007" name="Drug Metab. Dispos.">
        <title>Effect of pregnane X receptor ligand on pharmacokinetics of substrates of organic cation transporter Oct1 in rats.</title>
        <authorList>
            <person name="Maeda T."/>
            <person name="Oyabu M."/>
            <person name="Yotsumoto T."/>
            <person name="Higashi R."/>
            <person name="Nagata K."/>
            <person name="Yamazoe Y."/>
            <person name="Tamai I."/>
        </authorList>
    </citation>
    <scope>INDUCTION</scope>
</reference>
<reference key="29">
    <citation type="journal article" date="2007" name="Mol. Pharm.">
        <title>Transport of organic cations across the blood-testis barrier.</title>
        <authorList>
            <person name="Maeda T."/>
            <person name="Goto A."/>
            <person name="Kobayashi D."/>
            <person name="Tamai I."/>
        </authorList>
    </citation>
    <scope>FUNCTION</scope>
    <scope>TISSUE SPECIFICITY</scope>
</reference>
<reference key="30">
    <citation type="journal article" date="2012" name="Nat. Commun.">
        <title>Quantitative maps of protein phosphorylation sites across 14 different rat organs and tissues.</title>
        <authorList>
            <person name="Lundby A."/>
            <person name="Secher A."/>
            <person name="Lage K."/>
            <person name="Nordsborg N.B."/>
            <person name="Dmytriyev A."/>
            <person name="Lundby C."/>
            <person name="Olsen J.V."/>
        </authorList>
    </citation>
    <scope>PHOSPHORYLATION [LARGE SCALE ANALYSIS] AT SER-334</scope>
    <scope>IDENTIFICATION BY MASS SPECTROMETRY [LARGE SCALE ANALYSIS]</scope>
</reference>
<evidence type="ECO:0000250" key="1">
    <source>
        <dbReference type="UniProtKB" id="O08966"/>
    </source>
</evidence>
<evidence type="ECO:0000250" key="2">
    <source>
        <dbReference type="UniProtKB" id="O15245"/>
    </source>
</evidence>
<evidence type="ECO:0000255" key="3"/>
<evidence type="ECO:0000269" key="4">
    <source>
    </source>
</evidence>
<evidence type="ECO:0000269" key="5">
    <source>
    </source>
</evidence>
<evidence type="ECO:0000269" key="6">
    <source>
    </source>
</evidence>
<evidence type="ECO:0000269" key="7">
    <source>
    </source>
</evidence>
<evidence type="ECO:0000269" key="8">
    <source>
    </source>
</evidence>
<evidence type="ECO:0000269" key="9">
    <source>
    </source>
</evidence>
<evidence type="ECO:0000269" key="10">
    <source>
    </source>
</evidence>
<evidence type="ECO:0000269" key="11">
    <source>
    </source>
</evidence>
<evidence type="ECO:0000269" key="12">
    <source>
    </source>
</evidence>
<evidence type="ECO:0000269" key="13">
    <source>
    </source>
</evidence>
<evidence type="ECO:0000269" key="14">
    <source>
    </source>
</evidence>
<evidence type="ECO:0000269" key="15">
    <source>
    </source>
</evidence>
<evidence type="ECO:0000269" key="16">
    <source>
    </source>
</evidence>
<evidence type="ECO:0000269" key="17">
    <source>
    </source>
</evidence>
<evidence type="ECO:0000269" key="18">
    <source>
    </source>
</evidence>
<evidence type="ECO:0000269" key="19">
    <source>
    </source>
</evidence>
<evidence type="ECO:0000269" key="20">
    <source>
    </source>
</evidence>
<evidence type="ECO:0000269" key="21">
    <source>
    </source>
</evidence>
<evidence type="ECO:0000269" key="22">
    <source>
    </source>
</evidence>
<evidence type="ECO:0000269" key="23">
    <source>
    </source>
</evidence>
<evidence type="ECO:0000269" key="24">
    <source>
    </source>
</evidence>
<evidence type="ECO:0000269" key="25">
    <source>
    </source>
</evidence>
<evidence type="ECO:0000269" key="26">
    <source>
    </source>
</evidence>
<evidence type="ECO:0000269" key="27">
    <source>
    </source>
</evidence>
<evidence type="ECO:0000269" key="28">
    <source>
    </source>
</evidence>
<evidence type="ECO:0000269" key="29">
    <source>
    </source>
</evidence>
<evidence type="ECO:0000269" key="30">
    <source>
    </source>
</evidence>
<evidence type="ECO:0000303" key="31">
    <source>
    </source>
</evidence>
<evidence type="ECO:0000303" key="32">
    <source>
    </source>
</evidence>
<evidence type="ECO:0000303" key="33">
    <source>
    </source>
</evidence>
<evidence type="ECO:0000303" key="34">
    <source>
    </source>
</evidence>
<evidence type="ECO:0000305" key="35"/>
<evidence type="ECO:0000305" key="36">
    <source>
    </source>
</evidence>
<evidence type="ECO:0000305" key="37">
    <source>
    </source>
</evidence>
<evidence type="ECO:0000305" key="38">
    <source>
    </source>
</evidence>
<evidence type="ECO:0000305" key="39">
    <source>
    </source>
</evidence>
<evidence type="ECO:0000305" key="40">
    <source>
    </source>
</evidence>
<evidence type="ECO:0000312" key="41">
    <source>
        <dbReference type="RGD" id="3224"/>
    </source>
</evidence>
<evidence type="ECO:0007744" key="42">
    <source>
    </source>
</evidence>
<dbReference type="EMBL" id="X78855">
    <property type="protein sequence ID" value="CAA55411.1"/>
    <property type="molecule type" value="mRNA"/>
</dbReference>
<dbReference type="EMBL" id="U76379">
    <property type="protein sequence ID" value="AAB67702.1"/>
    <property type="molecule type" value="mRNA"/>
</dbReference>
<dbReference type="EMBL" id="BC078883">
    <property type="protein sequence ID" value="AAH78883.1"/>
    <property type="status" value="ALT_INIT"/>
    <property type="molecule type" value="mRNA"/>
</dbReference>
<dbReference type="PIR" id="S50862">
    <property type="entry name" value="S50862"/>
</dbReference>
<dbReference type="RefSeq" id="NP_036829.1">
    <molecule id="Q63089-1"/>
    <property type="nucleotide sequence ID" value="NM_012697.1"/>
</dbReference>
<dbReference type="RefSeq" id="XP_038957011.1">
    <molecule id="Q63089-2"/>
    <property type="nucleotide sequence ID" value="XM_039101083.2"/>
</dbReference>
<dbReference type="SMR" id="Q63089"/>
<dbReference type="FunCoup" id="Q63089">
    <property type="interactions" value="9"/>
</dbReference>
<dbReference type="IntAct" id="Q63089">
    <property type="interactions" value="1"/>
</dbReference>
<dbReference type="STRING" id="10116.ENSRNOP00000022254"/>
<dbReference type="BindingDB" id="Q63089"/>
<dbReference type="ChEMBL" id="CHEMBL2073670"/>
<dbReference type="TCDB" id="2.A.1.19.1">
    <property type="family name" value="the major facilitator superfamily (mfs)"/>
</dbReference>
<dbReference type="GlyCosmos" id="Q63089">
    <property type="glycosylation" value="1 site, No reported glycans"/>
</dbReference>
<dbReference type="GlyGen" id="Q63089">
    <property type="glycosylation" value="1 site"/>
</dbReference>
<dbReference type="iPTMnet" id="Q63089"/>
<dbReference type="PhosphoSitePlus" id="Q63089"/>
<dbReference type="PaxDb" id="10116-ENSRNOP00000022254"/>
<dbReference type="Ensembl" id="ENSRNOT00000022068.6">
    <molecule id="Q63089-2"/>
    <property type="protein sequence ID" value="ENSRNOP00000022068.3"/>
    <property type="gene ID" value="ENSRNOG00000016337.8"/>
</dbReference>
<dbReference type="Ensembl" id="ENSRNOT00000022254.6">
    <molecule id="Q63089-1"/>
    <property type="protein sequence ID" value="ENSRNOP00000022254.2"/>
    <property type="gene ID" value="ENSRNOG00000016337.8"/>
</dbReference>
<dbReference type="GeneID" id="24904"/>
<dbReference type="KEGG" id="rno:24904"/>
<dbReference type="AGR" id="RGD:3224"/>
<dbReference type="CTD" id="6580"/>
<dbReference type="RGD" id="3224">
    <property type="gene designation" value="Slc22a1"/>
</dbReference>
<dbReference type="eggNOG" id="KOG0255">
    <property type="taxonomic scope" value="Eukaryota"/>
</dbReference>
<dbReference type="GeneTree" id="ENSGT00940000162065"/>
<dbReference type="HOGENOM" id="CLU_001265_33_5_1"/>
<dbReference type="InParanoid" id="Q63089"/>
<dbReference type="OMA" id="IMIFIPH"/>
<dbReference type="OrthoDB" id="5141738at2759"/>
<dbReference type="PhylomeDB" id="Q63089"/>
<dbReference type="Reactome" id="R-RNO-112311">
    <property type="pathway name" value="Neurotransmitter clearance"/>
</dbReference>
<dbReference type="Reactome" id="R-RNO-181430">
    <property type="pathway name" value="Norepinephrine Neurotransmitter Release Cycle"/>
</dbReference>
<dbReference type="Reactome" id="R-RNO-2161517">
    <property type="pathway name" value="Abacavir transmembrane transport"/>
</dbReference>
<dbReference type="Reactome" id="R-RNO-442660">
    <property type="pathway name" value="Na+/Cl- dependent neurotransmitter transporters"/>
</dbReference>
<dbReference type="Reactome" id="R-RNO-549127">
    <property type="pathway name" value="Organic cation transport"/>
</dbReference>
<dbReference type="Reactome" id="R-RNO-9793528">
    <property type="pathway name" value="Ciprofloxacin ADME"/>
</dbReference>
<dbReference type="SABIO-RK" id="Q63089"/>
<dbReference type="PRO" id="PR:Q63089"/>
<dbReference type="Proteomes" id="UP000002494">
    <property type="component" value="Chromosome 1"/>
</dbReference>
<dbReference type="Bgee" id="ENSRNOG00000016337">
    <property type="expression patterns" value="Expressed in adult mammalian kidney and 13 other cell types or tissues"/>
</dbReference>
<dbReference type="GO" id="GO:0016324">
    <property type="term" value="C:apical plasma membrane"/>
    <property type="evidence" value="ECO:0000314"/>
    <property type="project" value="UniProtKB"/>
</dbReference>
<dbReference type="GO" id="GO:0009925">
    <property type="term" value="C:basal plasma membrane"/>
    <property type="evidence" value="ECO:0000266"/>
    <property type="project" value="RGD"/>
</dbReference>
<dbReference type="GO" id="GO:0016323">
    <property type="term" value="C:basolateral plasma membrane"/>
    <property type="evidence" value="ECO:0000314"/>
    <property type="project" value="UniProtKB"/>
</dbReference>
<dbReference type="GO" id="GO:0016328">
    <property type="term" value="C:lateral plasma membrane"/>
    <property type="evidence" value="ECO:0000250"/>
    <property type="project" value="UniProtKB"/>
</dbReference>
<dbReference type="GO" id="GO:0005886">
    <property type="term" value="C:plasma membrane"/>
    <property type="evidence" value="ECO:0000314"/>
    <property type="project" value="MGI"/>
</dbReference>
<dbReference type="GO" id="GO:0098793">
    <property type="term" value="C:presynapse"/>
    <property type="evidence" value="ECO:0007669"/>
    <property type="project" value="GOC"/>
</dbReference>
<dbReference type="GO" id="GO:1901235">
    <property type="term" value="F:(R)-carnitine transmembrane transporter activity"/>
    <property type="evidence" value="ECO:0000250"/>
    <property type="project" value="UniProtKB"/>
</dbReference>
<dbReference type="GO" id="GO:0005277">
    <property type="term" value="F:acetylcholine transmembrane transporter activity"/>
    <property type="evidence" value="ECO:0000314"/>
    <property type="project" value="UniProtKB"/>
</dbReference>
<dbReference type="GO" id="GO:0005330">
    <property type="term" value="F:dopamine:sodium symporter activity"/>
    <property type="evidence" value="ECO:0000314"/>
    <property type="project" value="RGD"/>
</dbReference>
<dbReference type="GO" id="GO:0042802">
    <property type="term" value="F:identical protein binding"/>
    <property type="evidence" value="ECO:0000353"/>
    <property type="project" value="IntAct"/>
</dbReference>
<dbReference type="GO" id="GO:0008504">
    <property type="term" value="F:monoamine transmembrane transporter activity"/>
    <property type="evidence" value="ECO:0000314"/>
    <property type="project" value="UniProtKB"/>
</dbReference>
<dbReference type="GO" id="GO:0005326">
    <property type="term" value="F:neurotransmitter transmembrane transporter activity"/>
    <property type="evidence" value="ECO:0000314"/>
    <property type="project" value="UniProtKB"/>
</dbReference>
<dbReference type="GO" id="GO:0005334">
    <property type="term" value="F:norepinephrine:sodium symporter activity"/>
    <property type="evidence" value="ECO:0000314"/>
    <property type="project" value="RGD"/>
</dbReference>
<dbReference type="GO" id="GO:0008514">
    <property type="term" value="F:organic anion transmembrane transporter activity"/>
    <property type="evidence" value="ECO:0000250"/>
    <property type="project" value="UniProtKB"/>
</dbReference>
<dbReference type="GO" id="GO:0015101">
    <property type="term" value="F:organic cation transmembrane transporter activity"/>
    <property type="evidence" value="ECO:0000314"/>
    <property type="project" value="UniProtKB"/>
</dbReference>
<dbReference type="GO" id="GO:0015132">
    <property type="term" value="F:prostaglandin transmembrane transporter activity"/>
    <property type="evidence" value="ECO:0000250"/>
    <property type="project" value="UniProtKB"/>
</dbReference>
<dbReference type="GO" id="GO:0015489">
    <property type="term" value="F:putrescine transmembrane transporter activity"/>
    <property type="evidence" value="ECO:0000250"/>
    <property type="project" value="UniProtKB"/>
</dbReference>
<dbReference type="GO" id="GO:0015214">
    <property type="term" value="F:pyrimidine nucleoside transmembrane transporter activity"/>
    <property type="evidence" value="ECO:0000266"/>
    <property type="project" value="RGD"/>
</dbReference>
<dbReference type="GO" id="GO:0015651">
    <property type="term" value="F:quaternary ammonium group transmembrane transporter activity"/>
    <property type="evidence" value="ECO:0000314"/>
    <property type="project" value="UniProtKB"/>
</dbReference>
<dbReference type="GO" id="GO:0015606">
    <property type="term" value="F:spermidine transmembrane transporter activity"/>
    <property type="evidence" value="ECO:0000250"/>
    <property type="project" value="UniProtKB"/>
</dbReference>
<dbReference type="GO" id="GO:0015234">
    <property type="term" value="F:thiamine transmembrane transporter activity"/>
    <property type="evidence" value="ECO:0000266"/>
    <property type="project" value="RGD"/>
</dbReference>
<dbReference type="GO" id="GO:0019534">
    <property type="term" value="F:toxin transmembrane transporter activity"/>
    <property type="evidence" value="ECO:0000315"/>
    <property type="project" value="ARUK-UCL"/>
</dbReference>
<dbReference type="GO" id="GO:0042910">
    <property type="term" value="F:xenobiotic transmembrane transporter activity"/>
    <property type="evidence" value="ECO:0000314"/>
    <property type="project" value="UniProtKB"/>
</dbReference>
<dbReference type="GO" id="GO:1902270">
    <property type="term" value="P:(R)-carnitine transmembrane transport"/>
    <property type="evidence" value="ECO:0000250"/>
    <property type="project" value="UniProtKB"/>
</dbReference>
<dbReference type="GO" id="GO:0015870">
    <property type="term" value="P:acetylcholine transport"/>
    <property type="evidence" value="ECO:0000314"/>
    <property type="project" value="UniProtKB"/>
</dbReference>
<dbReference type="GO" id="GO:1990748">
    <property type="term" value="P:cellular detoxification"/>
    <property type="evidence" value="ECO:0000315"/>
    <property type="project" value="ARUK-UCL"/>
</dbReference>
<dbReference type="GO" id="GO:0015872">
    <property type="term" value="P:dopamine transport"/>
    <property type="evidence" value="ECO:0000314"/>
    <property type="project" value="UniProtKB"/>
</dbReference>
<dbReference type="GO" id="GO:0090494">
    <property type="term" value="P:dopamine uptake"/>
    <property type="evidence" value="ECO:0000266"/>
    <property type="project" value="RGD"/>
</dbReference>
<dbReference type="GO" id="GO:0048241">
    <property type="term" value="P:epinephrine transport"/>
    <property type="evidence" value="ECO:0000314"/>
    <property type="project" value="UniProtKB"/>
</dbReference>
<dbReference type="GO" id="GO:0010248">
    <property type="term" value="P:establishment or maintenance of transmembrane electrochemical gradient"/>
    <property type="evidence" value="ECO:0000314"/>
    <property type="project" value="RGD"/>
</dbReference>
<dbReference type="GO" id="GO:0072237">
    <property type="term" value="P:metanephric proximal tubule development"/>
    <property type="evidence" value="ECO:0000270"/>
    <property type="project" value="RGD"/>
</dbReference>
<dbReference type="GO" id="GO:0015844">
    <property type="term" value="P:monoamine transport"/>
    <property type="evidence" value="ECO:0000314"/>
    <property type="project" value="UniProtKB"/>
</dbReference>
<dbReference type="GO" id="GO:0098655">
    <property type="term" value="P:monoatomic cation transmembrane transport"/>
    <property type="evidence" value="ECO:0000314"/>
    <property type="project" value="RGD"/>
</dbReference>
<dbReference type="GO" id="GO:0006812">
    <property type="term" value="P:monoatomic cation transport"/>
    <property type="evidence" value="ECO:0000266"/>
    <property type="project" value="RGD"/>
</dbReference>
<dbReference type="GO" id="GO:0006836">
    <property type="term" value="P:neurotransmitter transport"/>
    <property type="evidence" value="ECO:0000266"/>
    <property type="project" value="RGD"/>
</dbReference>
<dbReference type="GO" id="GO:0015874">
    <property type="term" value="P:norepinephrine transport"/>
    <property type="evidence" value="ECO:0000314"/>
    <property type="project" value="UniProtKB"/>
</dbReference>
<dbReference type="GO" id="GO:1902616">
    <property type="term" value="P:O-acyl-L-carnitine transmembrane transport"/>
    <property type="evidence" value="ECO:0000250"/>
    <property type="project" value="UniProtKB"/>
</dbReference>
<dbReference type="GO" id="GO:0015695">
    <property type="term" value="P:organic cation transport"/>
    <property type="evidence" value="ECO:0000314"/>
    <property type="project" value="RGD"/>
</dbReference>
<dbReference type="GO" id="GO:0015732">
    <property type="term" value="P:prostaglandin transport"/>
    <property type="evidence" value="ECO:0000250"/>
    <property type="project" value="UniProtKB"/>
</dbReference>
<dbReference type="GO" id="GO:0015847">
    <property type="term" value="P:putrescine transport"/>
    <property type="evidence" value="ECO:0000250"/>
    <property type="project" value="UniProtKB"/>
</dbReference>
<dbReference type="GO" id="GO:0015697">
    <property type="term" value="P:quaternary ammonium group transport"/>
    <property type="evidence" value="ECO:0000314"/>
    <property type="project" value="RGD"/>
</dbReference>
<dbReference type="GO" id="GO:0006837">
    <property type="term" value="P:serotonin transport"/>
    <property type="evidence" value="ECO:0000314"/>
    <property type="project" value="UniProtKB"/>
</dbReference>
<dbReference type="GO" id="GO:0051610">
    <property type="term" value="P:serotonin uptake"/>
    <property type="evidence" value="ECO:0000266"/>
    <property type="project" value="RGD"/>
</dbReference>
<dbReference type="GO" id="GO:0015848">
    <property type="term" value="P:spermidine transport"/>
    <property type="evidence" value="ECO:0000250"/>
    <property type="project" value="UniProtKB"/>
</dbReference>
<dbReference type="GO" id="GO:0071934">
    <property type="term" value="P:thiamine transmembrane transport"/>
    <property type="evidence" value="ECO:0000250"/>
    <property type="project" value="UniProtKB"/>
</dbReference>
<dbReference type="GO" id="GO:0015888">
    <property type="term" value="P:thiamine transport"/>
    <property type="evidence" value="ECO:0000250"/>
    <property type="project" value="UniProtKB"/>
</dbReference>
<dbReference type="GO" id="GO:0042908">
    <property type="term" value="P:xenobiotic transport"/>
    <property type="evidence" value="ECO:0000314"/>
    <property type="project" value="UniProtKB"/>
</dbReference>
<dbReference type="GO" id="GO:1990962">
    <property type="term" value="P:xenobiotic transport across blood-brain barrier"/>
    <property type="evidence" value="ECO:0000303"/>
    <property type="project" value="ARUK-UCL"/>
</dbReference>
<dbReference type="FunFam" id="1.20.1250.20:FF:000148">
    <property type="entry name" value="Solute carrier family 22 member 2"/>
    <property type="match status" value="1"/>
</dbReference>
<dbReference type="Gene3D" id="1.20.1250.20">
    <property type="entry name" value="MFS general substrate transporter like domains"/>
    <property type="match status" value="1"/>
</dbReference>
<dbReference type="InterPro" id="IPR020846">
    <property type="entry name" value="MFS_dom"/>
</dbReference>
<dbReference type="InterPro" id="IPR005828">
    <property type="entry name" value="MFS_sugar_transport-like"/>
</dbReference>
<dbReference type="InterPro" id="IPR036259">
    <property type="entry name" value="MFS_trans_sf"/>
</dbReference>
<dbReference type="InterPro" id="IPR004749">
    <property type="entry name" value="Orgcat_transp/SVOP"/>
</dbReference>
<dbReference type="InterPro" id="IPR005829">
    <property type="entry name" value="Sugar_transporter_CS"/>
</dbReference>
<dbReference type="NCBIfam" id="TIGR00898">
    <property type="entry name" value="2A0119"/>
    <property type="match status" value="1"/>
</dbReference>
<dbReference type="PANTHER" id="PTHR24064">
    <property type="entry name" value="SOLUTE CARRIER FAMILY 22 MEMBER"/>
    <property type="match status" value="1"/>
</dbReference>
<dbReference type="Pfam" id="PF00083">
    <property type="entry name" value="Sugar_tr"/>
    <property type="match status" value="1"/>
</dbReference>
<dbReference type="SUPFAM" id="SSF103473">
    <property type="entry name" value="MFS general substrate transporter"/>
    <property type="match status" value="1"/>
</dbReference>
<dbReference type="PROSITE" id="PS50850">
    <property type="entry name" value="MFS"/>
    <property type="match status" value="1"/>
</dbReference>
<dbReference type="PROSITE" id="PS00216">
    <property type="entry name" value="SUGAR_TRANSPORT_1"/>
    <property type="match status" value="1"/>
</dbReference>
<comment type="function">
    <text evidence="1 2 4 5 6 8 9 10 12 14 15 16 18 19 20 22 24 25 27 28 29 39">Electrogenic voltage-dependent transporter that mediates the transport of a variety of organic cations such as endogenous bioactive amines, cationic drugs and xenobiotics (PubMed:10570053, PubMed:10864577, PubMed:10997918, PubMed:11408531, PubMed:11502595, PubMed:12395288, PubMed:15640376, PubMed:15662044, PubMed:16142924, PubMed:16272756, PubMed:16581093, PubMed:17567940, PubMed:7990927, PubMed:8955087). Functions as a pH- and Na(+)-independent, bidirectional transporter (PubMed:16142924, PubMed:8955087). Cation cellular uptake or release is driven by the electrochemical potential (i.e. membrane potential and concentration gradient) and substrate selectivity (PubMed:16142924, PubMed:17567940, PubMed:8955087, PubMed:9405386). Hydrophobicity is a major requirement for recognition in polyvalent substrates and inhibitors (By similarity). Primarily expressed in the basolateral membrane of hepatocytes and proximal tubules and involved in the uptake and disposition of cationic compounds from the blood by hepatic and renal clearance (PubMed:10997918, PubMed:7990927, PubMed:9703985). Most likely functions as an uptake carrier in enterocytes contributing to the intestinal excretion and elimination of organic cations from the systemic circulation (By similarity). Transports endogenous monoamines such as N-1-methylnicotinamide (NMN), guanidine, neurotransmitters dopamine, serotonin, noradrenaline, adrenaline and histamine, and quaternary ammonium compound such as choline (PubMed:10570053, PubMed:11408531, PubMed:11502595, PubMed:11758759, PubMed:15662044, PubMed:16581093, PubMed:17567940, PubMed:8955087, PubMed:9776363). Also transports natural polyamines such as spermidine, agmatine and putrescine at low affinity, but relatively high turnover (By similarity). Involved in the hepatic uptake of vitamin B1/thiamine, hence regulating hepatic lipid and energy metabolism (By similarity). Contributes to the influx and efflux of fatty acid carriers carnitines and acylcarnitines across the basolateral membrane of hepatocytes, from the liver to the systemic circulation and inversely and may be involved in regulating the systemic availability of hepatic acylcarnitines (By similarity). Mediates the bidirectional transport of acetylcholine (ACh) at the apical membrane of ciliated cell in airway epithelium, thereby playing a role in luminal release of ACh from bronchial epithelium (PubMed:15817714). Transports dopaminergic neuromodulators cyclo(his-pro) and salsolinol with lower efficency (By similarity). Also capable of transporting non-amine endogenous compounds such as prostaglandin E2 (PGE2) and prostaglandin F2-alpha (PGF2-alpha) (By similarity). May contribute to the transport of cationic compounds in testis across the blood-testis-barrier (Probable). Also mediates the uptake of xenobiotics tributylmethylammonium (TBuMA), quinidine, N-methyl-quinine (NMQ), N-methyl-quinidine (NMQD) N-(4,4-azo-n-pentyl)-quinuclidine (APQ), azidoprocainamide methoiodide (AMP), N-(4,4-azo-n-pentyl)-21-deoxyajmalinium (APDA) and 4-(4-(dimethylamino)styryl)-N-methylpyridinium (ASP) (PubMed:10864577, PubMed:11408531, PubMed:12395288, PubMed:8955087).</text>
</comment>
<comment type="function">
    <molecule>Isoform 2</molecule>
    <text evidence="26">Functional isoform capable of transporting TEA.</text>
</comment>
<comment type="catalytic activity">
    <reaction evidence="4 9 25">
        <text>1-methylnicotinamide(out) = 1-methylnicotinamide(in)</text>
        <dbReference type="Rhea" id="RHEA:73859"/>
        <dbReference type="ChEBI" id="CHEBI:16797"/>
    </reaction>
</comment>
<comment type="catalytic activity">
    <reaction evidence="20 29">
        <text>dopamine(out) = dopamine(in)</text>
        <dbReference type="Rhea" id="RHEA:73863"/>
        <dbReference type="ChEBI" id="CHEBI:59905"/>
    </reaction>
</comment>
<comment type="catalytic activity">
    <reaction evidence="15 20 29">
        <text>serotonin(out) = serotonin(in)</text>
        <dbReference type="Rhea" id="RHEA:73867"/>
        <dbReference type="ChEBI" id="CHEBI:350546"/>
    </reaction>
</comment>
<comment type="catalytic activity">
    <reaction evidence="20">
        <text>(R)-adrenaline(out) = (R)-adrenaline(in)</text>
        <dbReference type="Rhea" id="RHEA:73875"/>
        <dbReference type="ChEBI" id="CHEBI:71406"/>
    </reaction>
</comment>
<comment type="catalytic activity">
    <reaction evidence="20 29">
        <text>(R)-noradrenaline(out) = (R)-noradrenaline(in)</text>
        <dbReference type="Rhea" id="RHEA:73871"/>
        <dbReference type="ChEBI" id="CHEBI:72587"/>
    </reaction>
</comment>
<comment type="catalytic activity">
    <reaction evidence="9 15">
        <text>histamine(out) = histamine(in)</text>
        <dbReference type="Rhea" id="RHEA:73879"/>
        <dbReference type="ChEBI" id="CHEBI:58432"/>
    </reaction>
</comment>
<comment type="catalytic activity">
    <reaction evidence="9 10 15">
        <text>guanidine(out) = guanidine(in)</text>
        <dbReference type="Rhea" id="RHEA:73883"/>
        <dbReference type="ChEBI" id="CHEBI:30087"/>
    </reaction>
</comment>
<comment type="catalytic activity">
    <reaction evidence="4 9 22 25">
        <text>choline(out) = choline(in)</text>
        <dbReference type="Rhea" id="RHEA:32751"/>
        <dbReference type="ChEBI" id="CHEBI:15354"/>
    </reaction>
</comment>
<comment type="catalytic activity">
    <reaction evidence="16">
        <text>acetylcholine(in) = acetylcholine(out)</text>
        <dbReference type="Rhea" id="RHEA:74663"/>
        <dbReference type="ChEBI" id="CHEBI:15355"/>
    </reaction>
</comment>
<comment type="catalytic activity">
    <reaction evidence="1">
        <text>thiamine(in) = thiamine(out)</text>
        <dbReference type="Rhea" id="RHEA:34919"/>
        <dbReference type="ChEBI" id="CHEBI:18385"/>
    </reaction>
</comment>
<comment type="catalytic activity">
    <reaction evidence="2">
        <text>agmatine(out) = agmatine(in)</text>
        <dbReference type="Rhea" id="RHEA:72131"/>
        <dbReference type="ChEBI" id="CHEBI:58145"/>
    </reaction>
</comment>
<comment type="catalytic activity">
    <reaction evidence="2">
        <text>putrescine(out) = putrescine(in)</text>
        <dbReference type="Rhea" id="RHEA:72135"/>
        <dbReference type="ChEBI" id="CHEBI:326268"/>
    </reaction>
</comment>
<comment type="catalytic activity">
    <reaction evidence="40">
        <text>spermidine(in) = spermidine(out)</text>
        <dbReference type="Rhea" id="RHEA:35039"/>
        <dbReference type="ChEBI" id="CHEBI:57834"/>
    </reaction>
</comment>
<comment type="catalytic activity">
    <reaction evidence="1">
        <text>(R)-carnitine(in) = (R)-carnitine(out)</text>
        <dbReference type="Rhea" id="RHEA:34959"/>
        <dbReference type="ChEBI" id="CHEBI:16347"/>
    </reaction>
</comment>
<comment type="catalytic activity">
    <reaction evidence="1">
        <text>O-isobutanoyl-(R)-carnitine(in) = O-isobutanoyl-(R)-carnitine(out)</text>
        <dbReference type="Rhea" id="RHEA:74315"/>
        <dbReference type="ChEBI" id="CHEBI:84838"/>
    </reaction>
</comment>
<comment type="catalytic activity">
    <reaction evidence="1">
        <text>O-acetyl-(R)-carnitine(in) = O-acetyl-(R)-carnitine(out)</text>
        <dbReference type="Rhea" id="RHEA:74319"/>
        <dbReference type="ChEBI" id="CHEBI:57589"/>
    </reaction>
</comment>
<comment type="catalytic activity">
    <reaction evidence="1">
        <text>O-3-hydroxybutanoyl-(R)-carnitine(in) = O-3-hydroxybutanoyl-(R)-carnitine(out)</text>
        <dbReference type="Rhea" id="RHEA:74323"/>
        <dbReference type="ChEBI" id="CHEBI:84842"/>
    </reaction>
</comment>
<comment type="catalytic activity">
    <reaction evidence="1">
        <text>O-propanoyl-(R)-carnitine(in) = O-propanoyl-(R)-carnitine(out)</text>
        <dbReference type="Rhea" id="RHEA:74327"/>
        <dbReference type="ChEBI" id="CHEBI:53210"/>
    </reaction>
</comment>
<comment type="catalytic activity">
    <reaction evidence="1">
        <text>O-butanoyl-(R)-carnitine(in) = O-butanoyl-(R)-carnitine(out)</text>
        <dbReference type="Rhea" id="RHEA:74331"/>
        <dbReference type="ChEBI" id="CHEBI:21949"/>
    </reaction>
</comment>
<comment type="catalytic activity">
    <reaction evidence="1">
        <text>O-2-methylbutanoyl-(R)-carnitine(in) = O-2-methylbutanoyl-(R)-carnitine(out)</text>
        <dbReference type="Rhea" id="RHEA:74335"/>
        <dbReference type="ChEBI" id="CHEBI:84840"/>
    </reaction>
</comment>
<comment type="catalytic activity">
    <reaction evidence="1">
        <text>O-3-methylbutanoyl-(R)-carnitine(in) = O-3-methylbutanoyl-(R)-carnitine(out)</text>
        <dbReference type="Rhea" id="RHEA:74339"/>
        <dbReference type="ChEBI" id="CHEBI:70819"/>
    </reaction>
</comment>
<comment type="catalytic activity">
    <reaction evidence="1">
        <text>O-hexanoyl-(R)-carnitine(in) = O-hexanoyl-(R)-carnitine(out)</text>
        <dbReference type="Rhea" id="RHEA:74343"/>
        <dbReference type="ChEBI" id="CHEBI:84834"/>
    </reaction>
</comment>
<comment type="catalytic activity">
    <reaction evidence="2">
        <text>L-histidyl-L-proline diketopiperazine(in) = L-histidyl-L-proline diketopiperazine(out)</text>
        <dbReference type="Rhea" id="RHEA:74787"/>
        <dbReference type="ChEBI" id="CHEBI:90039"/>
    </reaction>
</comment>
<comment type="catalytic activity">
    <reaction evidence="2">
        <text>(R)-salsolinol(in) = (R)-salsolinol(out)</text>
        <dbReference type="Rhea" id="RHEA:74791"/>
        <dbReference type="ChEBI" id="CHEBI:194082"/>
    </reaction>
</comment>
<comment type="catalytic activity">
    <reaction evidence="2">
        <text>prostaglandin F2alpha(out) = prostaglandin F2alpha(in)</text>
        <dbReference type="Rhea" id="RHEA:50988"/>
        <dbReference type="ChEBI" id="CHEBI:57404"/>
    </reaction>
</comment>
<comment type="catalytic activity">
    <reaction evidence="2">
        <text>prostaglandin E2(out) = prostaglandin E2(in)</text>
        <dbReference type="Rhea" id="RHEA:50984"/>
        <dbReference type="ChEBI" id="CHEBI:606564"/>
    </reaction>
</comment>
<comment type="activity regulation">
    <text evidence="5 12">Phosphorylation of the transporter leads to changes in its substrate affinity, resulting in a regulation of the transport activity (PubMed:10864577). In contrast with human ortholog, ASP uptake is stimulated by protein kinase A (PKA) and C (PKC) and endogenous tyrosine kinase activation (PubMed:10864577). ASP affinity is induced by PKC-dependent phosphorylation (PubMed:10864577). Inhibited by cGMP, most likely through a cGMP-binding protein that interacts with OCT1 (PubMed:12395288).</text>
</comment>
<comment type="biophysicochemical properties">
    <kinetics>
        <KM evidence="9">300 uM for histamine</KM>
        <KM evidence="25">340 uM for NMN</KM>
        <KM evidence="4">126 uM for NMN</KM>
        <KM evidence="20">800 uM for noradrenaline</KM>
        <KM evidence="20">900 uM for serotonin</KM>
        <KM evidence="20">1100 uM for adrenaline</KM>
        <KM evidence="25">1100 uM for choline</KM>
        <KM evidence="4">370 uM for choline</KM>
        <KM evidence="20">1600 uM for dopamine</KM>
        <KM evidence="9">1660 uM for guanidine</KM>
        <KM evidence="8">17.3 uM for NMQ</KM>
        <KM evidence="8">7.4 uM for NMQD</KM>
        <KM evidence="8">34 uM for TBuMA</KM>
        <KM evidence="8">54 uM for APM</KM>
    </kinetics>
    <phDependence>
        <text evidence="8 25">Optimum pH is 6.0 for the transport of the drug quinidine. No transport activity is observed at pH 7.5, possibly due to the protonation of quininide at pH6.0 (PubMed:11408531). TEA transport is independent of any pH (PubMed:8955087).</text>
    </phDependence>
</comment>
<comment type="interaction">
    <interactant intactId="EBI-5261153">
        <id>Q63089</id>
    </interactant>
    <interactant intactId="EBI-5261153">
        <id>Q63089</id>
        <label>Slc22a1</label>
    </interactant>
    <organismsDiffer>false</organismsDiffer>
    <experiments>4</experiments>
</comment>
<comment type="subcellular location">
    <subcellularLocation>
        <location evidence="6 7 24 28 30">Basolateral cell membrane</location>
        <topology evidence="35">Multi-pass membrane protein</topology>
    </subcellularLocation>
    <subcellularLocation>
        <location evidence="16">Apical cell membrane</location>
        <topology evidence="35">Multi-pass membrane protein</topology>
    </subcellularLocation>
    <subcellularLocation>
        <location evidence="2">Lateral cell membrane</location>
        <topology evidence="35">Multi-pass membrane protein</topology>
    </subcellularLocation>
    <subcellularLocation>
        <location evidence="2">Basal cell membrane</location>
        <topology evidence="35">Multi-pass membrane protein</topology>
    </subcellularLocation>
    <subcellularLocation>
        <location evidence="4">Cell membrane</location>
        <topology evidence="35">Multi-pass membrane protein</topology>
    </subcellularLocation>
    <text evidence="2 6 7 16 24 28 30">Localized to the sinusoidal/basolateral membrane of hepatocytes (PubMed:9703985). Mainly localized to the basolateral membrane of renal proximal tubular cells (PubMed:10997918, PubMed:11083459, PubMed:7990927, PubMed:9808712). Localized to the luminal/apical membrane of ciliated epithelial cells in the airway (PubMed:15817714).</text>
</comment>
<comment type="alternative products">
    <event type="alternative splicing"/>
    <isoform>
        <id>Q63089-1</id>
        <name>1</name>
        <sequence type="displayed"/>
    </isoform>
    <isoform>
        <id>Q63089-2</id>
        <name>2</name>
        <name>rOCT1A</name>
        <name>Pro 2</name>
        <sequence type="described" ref="VSP_033591 VSP_033592"/>
    </isoform>
</comment>
<comment type="tissue specificity">
    <text evidence="6 7 10 11 16 19 20 23 24 26 28 30">Expressed in kidney cortex in S1, S2 segments of renal proximal tubules as well as in kidney medulla (PubMed:10997918, PubMed:11083459, PubMed:11758759, PubMed:11792693, PubMed:16272756, PubMed:7990927, PubMed:9195965, PubMed:9808712, PubMed:9830022). Expressed throughout the liver lobuli, in hepatocytes surrounding the central veins (PubMed:16272756, PubMed:7990927, PubMed:9195965, PubMed:9703985, PubMed:9830022). Expressed in enterocytes of villi and crypts in small intestine (PubMed:7990927, PubMed:9195965, PubMed:9830022). Expressed in brain, in some white matter regions like the corpus callosum and in the granular layer of the cerebellum (PubMed:11792693, PubMed:16581093). Expressed in Sertoli cells in testis (PubMed:17616214). Expressed in colon (PubMed:7990927, PubMed:9195965). Expressed in tracheal and bronchial ciliated epithelium in the respiratory tract (PubMed:15817714). Expressed in spleen, moderately in skin, and weakly in the gastrointestinal tract, lung, thymus, muscle, and prostate (PubMed:11792693).</text>
</comment>
<comment type="tissue specificity">
    <molecule>Isoform 2</molecule>
    <text evidence="26">Expressed in kidney cortex and medulla (PubMed:9195965). Expressed in intestine, liver and colon (PubMed:9195965).</text>
</comment>
<comment type="developmental stage">
    <text evidence="11">Renal level increases gradually from postnatal day 1 through day 45 in both genders.</text>
</comment>
<comment type="induction">
    <text evidence="13 21">Down-regulated in obstructive cholestasis. Up-regulated by treatment with pregnenolone-16 alpha-carbonitrile (PCN) and by overexpression of pregnane X receptor (PXR).</text>
</comment>
<comment type="domain">
    <text evidence="36 37 38">A large substrate binding region with partially overlapping binding domains for structurally different substrates is formed by several transmembrane helix domains (TMH) including TMH 2, 4, 10 and 11, and it is alternatingly exposed to the extracellular or intracellular side during substrate transport.</text>
</comment>
<comment type="domain">
    <text evidence="2">Contains one proline-rich sequence (Pro-Glu-Ser-Pro-Arg) that is required for transport activity.</text>
</comment>
<comment type="PTM">
    <text evidence="5 17">Phosphorylated.</text>
</comment>
<comment type="miscellaneous">
    <text evidence="1 2 4 12 14 15 18 19 20 22 25 29">Involved in the uptake of clinically used drugs including diabete treatment medicine metformin, neurotoxins 1-methyl-4-phenylpyridinium (MPP(+)) and iobenguane and platinum-based drug cisplatin (PubMed:10570053, PubMed:12395288, PubMed:15640376, PubMed:15662044, PubMed:16142924, PubMed:16272756, PubMed:16581093, PubMed:17567940, PubMed:8955087, PubMed:9776363). Metformin competitively inhibits OCT1-mediated thiamine uptake, leading to a decrease in hepatic steatosis (By similarity). Plays a role in the anticancer activity of cisplatin and may contribute to antitumor specificity (By similarity).</text>
</comment>
<comment type="similarity">
    <text evidence="35">Belongs to the major facilitator (TC 2.A.1) superfamily. Organic cation transporter (TC 2.A.1.19) family.</text>
</comment>
<comment type="caution">
    <text evidence="2 6 7 24 30">Cellular localization of OCT1 in the intestine and the kidney remains to be finally defined. While most authors have deduced a localization at the basolateral side of enterocytes consistent with a physiological role in organic anions uptake from the blood flow and intestinal excretion (By similarity), other studies demonstrated an apical localization (By similarity), supporting a function in intestinal absorption of organic anions and drugs (By similarity). Similarly, contradictory findings have shown a localization to the basolateral side (PubMed:7990927, PubMed:9808712, PubMed:10997918, PubMed:11083459) or to the apical side (By similarity) of proximal tubules (By similarity) (PubMed:10997918, PubMed:11083459, PubMed:7990927, PubMed:9808712). Affinity and capacity of the transporter for endogenous substrates vary among orthologs (By similarity).</text>
</comment>
<comment type="sequence caution" evidence="35">
    <conflict type="erroneous initiation">
        <sequence resource="EMBL-CDS" id="AAH78883"/>
    </conflict>
</comment>
<keyword id="KW-0025">Alternative splicing</keyword>
<keyword id="KW-1003">Cell membrane</keyword>
<keyword id="KW-0325">Glycoprotein</keyword>
<keyword id="KW-0406">Ion transport</keyword>
<keyword id="KW-0472">Membrane</keyword>
<keyword id="KW-0597">Phosphoprotein</keyword>
<keyword id="KW-1185">Reference proteome</keyword>
<keyword id="KW-0812">Transmembrane</keyword>
<keyword id="KW-1133">Transmembrane helix</keyword>
<keyword id="KW-0813">Transport</keyword>